<sequence length="591" mass="64466">MAVAPLRGALLLWQLLAAGGAALEIGRFDPERGRGAAPCQAVEIPMCRGIGYNLTRMPNLLGHTSQGEAAAELAEFAPLVQYGCHSHLRFFLCSLYAPMCTDQVSTPIPACRPMCEQARLRCAPIMEQFNFGWPDSLDCARLPTRNDPHALCMEAPENATAGPAEPHKGLGMLPVAPRPARPPGDLGPGAGGSGTCENPEKFQYVEKSRSCAPRCGPGVEVFWSRRDKDFALVWMAVWSALCFFSTAFTVLTFLLEPHRFQYPERPIIFLSMCYNVYSLAFLIRAVAGAQSVACDQEAGALYVIQEGLENTGCTLVFLLLYYFGMASSLWWVVLTLTWFLAAGKKWGHEAIEAHGSYFHMAAWGLPALKTIVILTLRKVAGDELTGLCYVASTDAAALTGFVLVPLSGYLVLGSSFLLTGFVALFHIRKIMKTGGTNTEKLEKLMVKIGVFSILYTVPATCVIVCYVYERLNMDFWRLRATEQPCAAAAGPGGRRDCSLPGGSVPTVAVFMLKIFMSLVVGITSGVWVWSSKTFQTWQSLCYRKIAAGRARAKACRAPGSYGRGTHCHYKAPTVVLHMTKTDPSLENPTHL</sequence>
<organism>
    <name type="scientific">Homo sapiens</name>
    <name type="common">Human</name>
    <dbReference type="NCBI Taxonomy" id="9606"/>
    <lineage>
        <taxon>Eukaryota</taxon>
        <taxon>Metazoa</taxon>
        <taxon>Chordata</taxon>
        <taxon>Craniata</taxon>
        <taxon>Vertebrata</taxon>
        <taxon>Euteleostomi</taxon>
        <taxon>Mammalia</taxon>
        <taxon>Eutheria</taxon>
        <taxon>Euarchontoglires</taxon>
        <taxon>Primates</taxon>
        <taxon>Haplorrhini</taxon>
        <taxon>Catarrhini</taxon>
        <taxon>Hominidae</taxon>
        <taxon>Homo</taxon>
    </lineage>
</organism>
<evidence type="ECO:0000250" key="1"/>
<evidence type="ECO:0000250" key="2">
    <source>
        <dbReference type="UniProtKB" id="Q8K4C8"/>
    </source>
</evidence>
<evidence type="ECO:0000250" key="3">
    <source>
        <dbReference type="UniProtKB" id="Q9R216"/>
    </source>
</evidence>
<evidence type="ECO:0000255" key="4"/>
<evidence type="ECO:0000255" key="5">
    <source>
        <dbReference type="PROSITE-ProRule" id="PRU00090"/>
    </source>
</evidence>
<evidence type="ECO:0000269" key="6">
    <source>
    </source>
</evidence>
<evidence type="ECO:0000305" key="7"/>
<name>FZD9_HUMAN</name>
<proteinExistence type="evidence at protein level"/>
<keyword id="KW-1003">Cell membrane</keyword>
<keyword id="KW-0217">Developmental protein</keyword>
<keyword id="KW-1015">Disulfide bond</keyword>
<keyword id="KW-0297">G-protein coupled receptor</keyword>
<keyword id="KW-0325">Glycoprotein</keyword>
<keyword id="KW-0472">Membrane</keyword>
<keyword id="KW-1267">Proteomics identification</keyword>
<keyword id="KW-0675">Receptor</keyword>
<keyword id="KW-1185">Reference proteome</keyword>
<keyword id="KW-0732">Signal</keyword>
<keyword id="KW-0807">Transducer</keyword>
<keyword id="KW-0812">Transmembrane</keyword>
<keyword id="KW-1133">Transmembrane helix</keyword>
<keyword id="KW-0832">Ubl conjugation</keyword>
<keyword id="KW-0879">Wnt signaling pathway</keyword>
<accession>O00144</accession>
<protein>
    <recommendedName>
        <fullName>Frizzled-9</fullName>
        <shortName>Fz-9</shortName>
        <shortName>hFz9</shortName>
    </recommendedName>
    <alternativeName>
        <fullName>FzE6</fullName>
    </alternativeName>
    <cdAntigenName>CD349</cdAntigenName>
</protein>
<dbReference type="EMBL" id="U82169">
    <property type="protein sequence ID" value="AAC51174.1"/>
    <property type="molecule type" value="mRNA"/>
</dbReference>
<dbReference type="EMBL" id="AC005049">
    <property type="protein sequence ID" value="AAQ93359.1"/>
    <property type="molecule type" value="Genomic_DNA"/>
</dbReference>
<dbReference type="CCDS" id="CCDS5548.1"/>
<dbReference type="RefSeq" id="NP_003499.1">
    <property type="nucleotide sequence ID" value="NM_003508.3"/>
</dbReference>
<dbReference type="SMR" id="O00144"/>
<dbReference type="BioGRID" id="113922">
    <property type="interactions" value="4"/>
</dbReference>
<dbReference type="FunCoup" id="O00144">
    <property type="interactions" value="641"/>
</dbReference>
<dbReference type="IntAct" id="O00144">
    <property type="interactions" value="1"/>
</dbReference>
<dbReference type="STRING" id="9606.ENSP00000345785"/>
<dbReference type="ChEMBL" id="CHEMBL4523116"/>
<dbReference type="GlyCosmos" id="O00144">
    <property type="glycosylation" value="2 sites, No reported glycans"/>
</dbReference>
<dbReference type="GlyGen" id="O00144">
    <property type="glycosylation" value="2 sites, 4 N-linked glycans (2 sites)"/>
</dbReference>
<dbReference type="iPTMnet" id="O00144"/>
<dbReference type="PhosphoSitePlus" id="O00144"/>
<dbReference type="BioMuta" id="FZD9"/>
<dbReference type="jPOST" id="O00144"/>
<dbReference type="MassIVE" id="O00144"/>
<dbReference type="PaxDb" id="9606-ENSP00000345785"/>
<dbReference type="PeptideAtlas" id="O00144"/>
<dbReference type="ProteomicsDB" id="47734"/>
<dbReference type="ABCD" id="O00144">
    <property type="antibodies" value="10 sequenced antibodies"/>
</dbReference>
<dbReference type="Antibodypedia" id="14305">
    <property type="antibodies" value="524 antibodies from 37 providers"/>
</dbReference>
<dbReference type="DNASU" id="8326"/>
<dbReference type="Ensembl" id="ENST00000344575.5">
    <property type="protein sequence ID" value="ENSP00000345785.3"/>
    <property type="gene ID" value="ENSG00000188763.5"/>
</dbReference>
<dbReference type="GeneID" id="8326"/>
<dbReference type="KEGG" id="hsa:8326"/>
<dbReference type="MANE-Select" id="ENST00000344575.5">
    <property type="protein sequence ID" value="ENSP00000345785.3"/>
    <property type="RefSeq nucleotide sequence ID" value="NM_003508.3"/>
    <property type="RefSeq protein sequence ID" value="NP_003499.1"/>
</dbReference>
<dbReference type="UCSC" id="uc003tyb.4">
    <property type="organism name" value="human"/>
</dbReference>
<dbReference type="AGR" id="HGNC:4047"/>
<dbReference type="CTD" id="8326"/>
<dbReference type="DisGeNET" id="8326"/>
<dbReference type="GeneCards" id="FZD9"/>
<dbReference type="HGNC" id="HGNC:4047">
    <property type="gene designation" value="FZD9"/>
</dbReference>
<dbReference type="HPA" id="ENSG00000188763">
    <property type="expression patterns" value="Tissue enhanced (brain, skeletal muscle, testis)"/>
</dbReference>
<dbReference type="MIM" id="601766">
    <property type="type" value="gene"/>
</dbReference>
<dbReference type="neXtProt" id="NX_O00144"/>
<dbReference type="OpenTargets" id="ENSG00000188763"/>
<dbReference type="PharmGKB" id="PA28464"/>
<dbReference type="VEuPathDB" id="HostDB:ENSG00000188763"/>
<dbReference type="eggNOG" id="KOG3577">
    <property type="taxonomic scope" value="Eukaryota"/>
</dbReference>
<dbReference type="GeneTree" id="ENSGT00940000161226"/>
<dbReference type="HOGENOM" id="CLU_007873_2_1_1"/>
<dbReference type="InParanoid" id="O00144"/>
<dbReference type="OMA" id="VAYGCHG"/>
<dbReference type="OrthoDB" id="5959102at2759"/>
<dbReference type="PAN-GO" id="O00144">
    <property type="GO annotations" value="6 GO annotations based on evolutionary models"/>
</dbReference>
<dbReference type="PhylomeDB" id="O00144"/>
<dbReference type="TreeFam" id="TF317907"/>
<dbReference type="PathwayCommons" id="O00144"/>
<dbReference type="Reactome" id="R-HSA-373080">
    <property type="pathway name" value="Class B/2 (Secretin family receptors)"/>
</dbReference>
<dbReference type="SignaLink" id="O00144"/>
<dbReference type="SIGNOR" id="O00144"/>
<dbReference type="BioGRID-ORCS" id="8326">
    <property type="hits" value="11 hits in 1150 CRISPR screens"/>
</dbReference>
<dbReference type="GeneWiki" id="FZD9"/>
<dbReference type="GenomeRNAi" id="8326"/>
<dbReference type="Pharos" id="O00144">
    <property type="development level" value="Tbio"/>
</dbReference>
<dbReference type="PRO" id="PR:O00144"/>
<dbReference type="Proteomes" id="UP000005640">
    <property type="component" value="Chromosome 7"/>
</dbReference>
<dbReference type="RNAct" id="O00144">
    <property type="molecule type" value="protein"/>
</dbReference>
<dbReference type="Bgee" id="ENSG00000188763">
    <property type="expression patterns" value="Expressed in cartilage tissue and 95 other cell types or tissues"/>
</dbReference>
<dbReference type="GO" id="GO:0009986">
    <property type="term" value="C:cell surface"/>
    <property type="evidence" value="ECO:0000314"/>
    <property type="project" value="BHF-UCL"/>
</dbReference>
<dbReference type="GO" id="GO:0005737">
    <property type="term" value="C:cytoplasm"/>
    <property type="evidence" value="ECO:0000314"/>
    <property type="project" value="BHF-UCL"/>
</dbReference>
<dbReference type="GO" id="GO:0005789">
    <property type="term" value="C:endoplasmic reticulum membrane"/>
    <property type="evidence" value="ECO:0000250"/>
    <property type="project" value="UniProtKB"/>
</dbReference>
<dbReference type="GO" id="GO:0005615">
    <property type="term" value="C:extracellular space"/>
    <property type="evidence" value="ECO:0000318"/>
    <property type="project" value="GO_Central"/>
</dbReference>
<dbReference type="GO" id="GO:0031527">
    <property type="term" value="C:filopodium membrane"/>
    <property type="evidence" value="ECO:0007669"/>
    <property type="project" value="Ensembl"/>
</dbReference>
<dbReference type="GO" id="GO:0005794">
    <property type="term" value="C:Golgi apparatus"/>
    <property type="evidence" value="ECO:0000250"/>
    <property type="project" value="UniProtKB"/>
</dbReference>
<dbReference type="GO" id="GO:0016020">
    <property type="term" value="C:membrane"/>
    <property type="evidence" value="ECO:0000304"/>
    <property type="project" value="ProtInc"/>
</dbReference>
<dbReference type="GO" id="GO:0031966">
    <property type="term" value="C:mitochondrial membrane"/>
    <property type="evidence" value="ECO:0000250"/>
    <property type="project" value="UniProtKB"/>
</dbReference>
<dbReference type="GO" id="GO:0048471">
    <property type="term" value="C:perinuclear region of cytoplasm"/>
    <property type="evidence" value="ECO:0007669"/>
    <property type="project" value="Ensembl"/>
</dbReference>
<dbReference type="GO" id="GO:0005886">
    <property type="term" value="C:plasma membrane"/>
    <property type="evidence" value="ECO:0000314"/>
    <property type="project" value="UniProtKB"/>
</dbReference>
<dbReference type="GO" id="GO:0004930">
    <property type="term" value="F:G protein-coupled receptor activity"/>
    <property type="evidence" value="ECO:0007669"/>
    <property type="project" value="UniProtKB-KW"/>
</dbReference>
<dbReference type="GO" id="GO:0046982">
    <property type="term" value="F:protein heterodimerization activity"/>
    <property type="evidence" value="ECO:0000353"/>
    <property type="project" value="BHF-UCL"/>
</dbReference>
<dbReference type="GO" id="GO:0042803">
    <property type="term" value="F:protein homodimerization activity"/>
    <property type="evidence" value="ECO:0000353"/>
    <property type="project" value="BHF-UCL"/>
</dbReference>
<dbReference type="GO" id="GO:0042813">
    <property type="term" value="F:Wnt receptor activity"/>
    <property type="evidence" value="ECO:0000250"/>
    <property type="project" value="UniProtKB"/>
</dbReference>
<dbReference type="GO" id="GO:0017147">
    <property type="term" value="F:Wnt-protein binding"/>
    <property type="evidence" value="ECO:0000353"/>
    <property type="project" value="UniProtKB"/>
</dbReference>
<dbReference type="GO" id="GO:0030183">
    <property type="term" value="P:B cell differentiation"/>
    <property type="evidence" value="ECO:0007669"/>
    <property type="project" value="Ensembl"/>
</dbReference>
<dbReference type="GO" id="GO:1990523">
    <property type="term" value="P:bone regeneration"/>
    <property type="evidence" value="ECO:0000250"/>
    <property type="project" value="UniProtKB"/>
</dbReference>
<dbReference type="GO" id="GO:0060070">
    <property type="term" value="P:canonical Wnt signaling pathway"/>
    <property type="evidence" value="ECO:0000318"/>
    <property type="project" value="GO_Central"/>
</dbReference>
<dbReference type="GO" id="GO:0007611">
    <property type="term" value="P:learning or memory"/>
    <property type="evidence" value="ECO:0007669"/>
    <property type="project" value="Ensembl"/>
</dbReference>
<dbReference type="GO" id="GO:0051902">
    <property type="term" value="P:negative regulation of mitochondrial depolarization"/>
    <property type="evidence" value="ECO:0000250"/>
    <property type="project" value="UniProtKB"/>
</dbReference>
<dbReference type="GO" id="GO:1901029">
    <property type="term" value="P:negative regulation of mitochondrial outer membrane permeabilization involved in apoptotic signaling pathway"/>
    <property type="evidence" value="ECO:0000250"/>
    <property type="project" value="UniProtKB"/>
</dbReference>
<dbReference type="GO" id="GO:0060546">
    <property type="term" value="P:negative regulation of necroptotic process"/>
    <property type="evidence" value="ECO:0000250"/>
    <property type="project" value="UniProtKB"/>
</dbReference>
<dbReference type="GO" id="GO:0043524">
    <property type="term" value="P:negative regulation of neuron apoptotic process"/>
    <property type="evidence" value="ECO:0000315"/>
    <property type="project" value="UniProtKB"/>
</dbReference>
<dbReference type="GO" id="GO:1904394">
    <property type="term" value="P:negative regulation of skeletal muscle acetylcholine-gated channel clustering"/>
    <property type="evidence" value="ECO:0000250"/>
    <property type="project" value="UniProtKB"/>
</dbReference>
<dbReference type="GO" id="GO:0007399">
    <property type="term" value="P:nervous system development"/>
    <property type="evidence" value="ECO:0000304"/>
    <property type="project" value="ProtInc"/>
</dbReference>
<dbReference type="GO" id="GO:0007405">
    <property type="term" value="P:neuroblast proliferation"/>
    <property type="evidence" value="ECO:0007669"/>
    <property type="project" value="Ensembl"/>
</dbReference>
<dbReference type="GO" id="GO:0035567">
    <property type="term" value="P:non-canonical Wnt signaling pathway"/>
    <property type="evidence" value="ECO:0000318"/>
    <property type="project" value="GO_Central"/>
</dbReference>
<dbReference type="GO" id="GO:0001503">
    <property type="term" value="P:ossification"/>
    <property type="evidence" value="ECO:0000250"/>
    <property type="project" value="UniProtKB"/>
</dbReference>
<dbReference type="GO" id="GO:0043065">
    <property type="term" value="P:positive regulation of apoptotic process"/>
    <property type="evidence" value="ECO:0000250"/>
    <property type="project" value="UniProtKB"/>
</dbReference>
<dbReference type="GO" id="GO:0030501">
    <property type="term" value="P:positive regulation of bone mineralization"/>
    <property type="evidence" value="ECO:0000250"/>
    <property type="project" value="UniProtKB"/>
</dbReference>
<dbReference type="GO" id="GO:0090263">
    <property type="term" value="P:positive regulation of canonical Wnt signaling pathway"/>
    <property type="evidence" value="ECO:0000250"/>
    <property type="project" value="UniProtKB"/>
</dbReference>
<dbReference type="GO" id="GO:2000179">
    <property type="term" value="P:positive regulation of neural precursor cell proliferation"/>
    <property type="evidence" value="ECO:0000315"/>
    <property type="project" value="UniProtKB"/>
</dbReference>
<dbReference type="GO" id="GO:0051726">
    <property type="term" value="P:regulation of cell cycle"/>
    <property type="evidence" value="ECO:0000315"/>
    <property type="project" value="UniProtKB"/>
</dbReference>
<dbReference type="GO" id="GO:0051480">
    <property type="term" value="P:regulation of cytosolic calcium ion concentration"/>
    <property type="evidence" value="ECO:0000250"/>
    <property type="project" value="UniProtKB"/>
</dbReference>
<dbReference type="GO" id="GO:1904393">
    <property type="term" value="P:regulation of skeletal muscle acetylcholine-gated channel clustering"/>
    <property type="evidence" value="ECO:0000250"/>
    <property type="project" value="UniProtKB"/>
</dbReference>
<dbReference type="GO" id="GO:0001836">
    <property type="term" value="P:release of cytochrome c from mitochondria"/>
    <property type="evidence" value="ECO:0000250"/>
    <property type="project" value="UniProtKB"/>
</dbReference>
<dbReference type="CDD" id="cd15036">
    <property type="entry name" value="7tmF_FZD9"/>
    <property type="match status" value="1"/>
</dbReference>
<dbReference type="FunFam" id="1.10.2000.10:FF:000007">
    <property type="entry name" value="Frizzled class receptor 10"/>
    <property type="match status" value="1"/>
</dbReference>
<dbReference type="FunFam" id="1.20.1070.10:FF:000020">
    <property type="entry name" value="Frizzled class receptor 10"/>
    <property type="match status" value="1"/>
</dbReference>
<dbReference type="Gene3D" id="1.10.2000.10">
    <property type="entry name" value="Frizzled cysteine-rich domain"/>
    <property type="match status" value="1"/>
</dbReference>
<dbReference type="Gene3D" id="1.20.1070.10">
    <property type="entry name" value="Rhodopsin 7-helix transmembrane proteins"/>
    <property type="match status" value="1"/>
</dbReference>
<dbReference type="InterPro" id="IPR015526">
    <property type="entry name" value="Frizzled/SFRP"/>
</dbReference>
<dbReference type="InterPro" id="IPR000539">
    <property type="entry name" value="Frizzled/Smoothened_7TM"/>
</dbReference>
<dbReference type="InterPro" id="IPR020067">
    <property type="entry name" value="Frizzled_dom"/>
</dbReference>
<dbReference type="InterPro" id="IPR036790">
    <property type="entry name" value="Frizzled_dom_sf"/>
</dbReference>
<dbReference type="InterPro" id="IPR017981">
    <property type="entry name" value="GPCR_2-like_7TM"/>
</dbReference>
<dbReference type="PANTHER" id="PTHR11309">
    <property type="entry name" value="FRIZZLED"/>
    <property type="match status" value="1"/>
</dbReference>
<dbReference type="PANTHER" id="PTHR11309:SF79">
    <property type="entry name" value="FRIZZLED-9"/>
    <property type="match status" value="1"/>
</dbReference>
<dbReference type="Pfam" id="PF01534">
    <property type="entry name" value="Frizzled"/>
    <property type="match status" value="1"/>
</dbReference>
<dbReference type="Pfam" id="PF01392">
    <property type="entry name" value="Fz"/>
    <property type="match status" value="1"/>
</dbReference>
<dbReference type="PRINTS" id="PR00489">
    <property type="entry name" value="FRIZZLED"/>
</dbReference>
<dbReference type="SMART" id="SM00063">
    <property type="entry name" value="FRI"/>
    <property type="match status" value="1"/>
</dbReference>
<dbReference type="SMART" id="SM01330">
    <property type="entry name" value="Frizzled"/>
    <property type="match status" value="1"/>
</dbReference>
<dbReference type="SUPFAM" id="SSF63501">
    <property type="entry name" value="Frizzled cysteine-rich domain"/>
    <property type="match status" value="1"/>
</dbReference>
<dbReference type="PROSITE" id="PS50038">
    <property type="entry name" value="FZ"/>
    <property type="match status" value="1"/>
</dbReference>
<dbReference type="PROSITE" id="PS50261">
    <property type="entry name" value="G_PROTEIN_RECEP_F2_4"/>
    <property type="match status" value="1"/>
</dbReference>
<reference key="1">
    <citation type="journal article" date="1997" name="Hum. Mol. Genet.">
        <title>A novel human homologue of the Drosophila frizzled wnt receptor gene binds wingless protein and is in the Williams syndrome deletion at 7q11.23.</title>
        <authorList>
            <person name="Wang Y.-K."/>
            <person name="Samos H.C."/>
            <person name="Peoples R."/>
            <person name="Perez-Jurado L.A."/>
            <person name="Nusse R."/>
            <person name="Francke U."/>
        </authorList>
    </citation>
    <scope>NUCLEOTIDE SEQUENCE [MRNA]</scope>
    <source>
        <tissue>Fetal brain</tissue>
    </source>
</reference>
<reference key="2">
    <citation type="journal article" date="2003" name="Nature">
        <title>The DNA sequence of human chromosome 7.</title>
        <authorList>
            <person name="Hillier L.W."/>
            <person name="Fulton R.S."/>
            <person name="Fulton L.A."/>
            <person name="Graves T.A."/>
            <person name="Pepin K.H."/>
            <person name="Wagner-McPherson C."/>
            <person name="Layman D."/>
            <person name="Maas J."/>
            <person name="Jaeger S."/>
            <person name="Walker R."/>
            <person name="Wylie K."/>
            <person name="Sekhon M."/>
            <person name="Becker M.C."/>
            <person name="O'Laughlin M.D."/>
            <person name="Schaller M.E."/>
            <person name="Fewell G.A."/>
            <person name="Delehaunty K.D."/>
            <person name="Miner T.L."/>
            <person name="Nash W.E."/>
            <person name="Cordes M."/>
            <person name="Du H."/>
            <person name="Sun H."/>
            <person name="Edwards J."/>
            <person name="Bradshaw-Cordum H."/>
            <person name="Ali J."/>
            <person name="Andrews S."/>
            <person name="Isak A."/>
            <person name="Vanbrunt A."/>
            <person name="Nguyen C."/>
            <person name="Du F."/>
            <person name="Lamar B."/>
            <person name="Courtney L."/>
            <person name="Kalicki J."/>
            <person name="Ozersky P."/>
            <person name="Bielicki L."/>
            <person name="Scott K."/>
            <person name="Holmes A."/>
            <person name="Harkins R."/>
            <person name="Harris A."/>
            <person name="Strong C.M."/>
            <person name="Hou S."/>
            <person name="Tomlinson C."/>
            <person name="Dauphin-Kohlberg S."/>
            <person name="Kozlowicz-Reilly A."/>
            <person name="Leonard S."/>
            <person name="Rohlfing T."/>
            <person name="Rock S.M."/>
            <person name="Tin-Wollam A.-M."/>
            <person name="Abbott A."/>
            <person name="Minx P."/>
            <person name="Maupin R."/>
            <person name="Strowmatt C."/>
            <person name="Latreille P."/>
            <person name="Miller N."/>
            <person name="Johnson D."/>
            <person name="Murray J."/>
            <person name="Woessner J.P."/>
            <person name="Wendl M.C."/>
            <person name="Yang S.-P."/>
            <person name="Schultz B.R."/>
            <person name="Wallis J.W."/>
            <person name="Spieth J."/>
            <person name="Bieri T.A."/>
            <person name="Nelson J.O."/>
            <person name="Berkowicz N."/>
            <person name="Wohldmann P.E."/>
            <person name="Cook L.L."/>
            <person name="Hickenbotham M.T."/>
            <person name="Eldred J."/>
            <person name="Williams D."/>
            <person name="Bedell J.A."/>
            <person name="Mardis E.R."/>
            <person name="Clifton S.W."/>
            <person name="Chissoe S.L."/>
            <person name="Marra M.A."/>
            <person name="Raymond C."/>
            <person name="Haugen E."/>
            <person name="Gillett W."/>
            <person name="Zhou Y."/>
            <person name="James R."/>
            <person name="Phelps K."/>
            <person name="Iadanoto S."/>
            <person name="Bubb K."/>
            <person name="Simms E."/>
            <person name="Levy R."/>
            <person name="Clendenning J."/>
            <person name="Kaul R."/>
            <person name="Kent W.J."/>
            <person name="Furey T.S."/>
            <person name="Baertsch R.A."/>
            <person name="Brent M.R."/>
            <person name="Keibler E."/>
            <person name="Flicek P."/>
            <person name="Bork P."/>
            <person name="Suyama M."/>
            <person name="Bailey J.A."/>
            <person name="Portnoy M.E."/>
            <person name="Torrents D."/>
            <person name="Chinwalla A.T."/>
            <person name="Gish W.R."/>
            <person name="Eddy S.R."/>
            <person name="McPherson J.D."/>
            <person name="Olson M.V."/>
            <person name="Eichler E.E."/>
            <person name="Green E.D."/>
            <person name="Waterston R.H."/>
            <person name="Wilson R.K."/>
        </authorList>
    </citation>
    <scope>NUCLEOTIDE SEQUENCE [LARGE SCALE GENOMIC DNA]</scope>
</reference>
<reference key="3">
    <citation type="journal article" date="1998" name="Proc. Natl. Acad. Sci. U.S.A.">
        <title>A novel frizzled gene identified in human esophageal carcinoma mediates APC/beta-catenin signals.</title>
        <authorList>
            <person name="Tanaka S."/>
            <person name="Akiyoshi T."/>
            <person name="Mori M."/>
            <person name="Wands J.R."/>
            <person name="Sugimachi K."/>
        </authorList>
    </citation>
    <scope>NUCLEOTIDE SEQUENCE OF 269-329</scope>
    <source>
        <tissue>Esophageal carcinoma</tissue>
    </source>
</reference>
<reference key="4">
    <citation type="journal article" date="2016" name="Nature">
        <title>A human neurodevelopmental model for Williams syndrome.</title>
        <authorList>
            <person name="Chailangkarn T."/>
            <person name="Trujillo C.A."/>
            <person name="Freitas B.C."/>
            <person name="Hrvoj-Mihic B."/>
            <person name="Herai R.H."/>
            <person name="Yu D.X."/>
            <person name="Brown T.T."/>
            <person name="Marchetto M.C."/>
            <person name="Bardy C."/>
            <person name="McHenry L."/>
            <person name="Stefanacci L."/>
            <person name="Jaervinen A."/>
            <person name="Searcy Y.M."/>
            <person name="DeWitt M."/>
            <person name="Wong W."/>
            <person name="Lai P."/>
            <person name="Ard M.C."/>
            <person name="Hanson K.L."/>
            <person name="Romero S."/>
            <person name="Jacobs B."/>
            <person name="Dale A.M."/>
            <person name="Dai L."/>
            <person name="Korenberg J.R."/>
            <person name="Gage F.H."/>
            <person name="Bellugi U."/>
            <person name="Halgren E."/>
            <person name="Semendeferi K."/>
            <person name="Muotri A.R."/>
        </authorList>
    </citation>
    <scope>FUNCTION</scope>
    <scope>TISSUE SPECIFICITY</scope>
</reference>
<feature type="signal peptide" evidence="4">
    <location>
        <begin position="1"/>
        <end position="22"/>
    </location>
</feature>
<feature type="chain" id="PRO_0000013003" description="Frizzled-9">
    <location>
        <begin position="23"/>
        <end position="591"/>
    </location>
</feature>
<feature type="topological domain" description="Extracellular" evidence="4">
    <location>
        <begin position="23"/>
        <end position="229"/>
    </location>
</feature>
<feature type="transmembrane region" description="Helical; Name=1" evidence="4">
    <location>
        <begin position="230"/>
        <end position="250"/>
    </location>
</feature>
<feature type="topological domain" description="Cytoplasmic" evidence="4">
    <location>
        <begin position="251"/>
        <end position="266"/>
    </location>
</feature>
<feature type="transmembrane region" description="Helical; Name=2" evidence="4">
    <location>
        <begin position="267"/>
        <end position="287"/>
    </location>
</feature>
<feature type="topological domain" description="Extracellular" evidence="4">
    <location>
        <begin position="288"/>
        <end position="315"/>
    </location>
</feature>
<feature type="transmembrane region" description="Helical; Name=3" evidence="4">
    <location>
        <begin position="316"/>
        <end position="336"/>
    </location>
</feature>
<feature type="topological domain" description="Cytoplasmic" evidence="4">
    <location>
        <begin position="337"/>
        <end position="355"/>
    </location>
</feature>
<feature type="transmembrane region" description="Helical; Name=4" evidence="4">
    <location>
        <begin position="356"/>
        <end position="376"/>
    </location>
</feature>
<feature type="topological domain" description="Extracellular" evidence="4">
    <location>
        <begin position="377"/>
        <end position="400"/>
    </location>
</feature>
<feature type="transmembrane region" description="Helical; Name=5" evidence="4">
    <location>
        <begin position="401"/>
        <end position="421"/>
    </location>
</feature>
<feature type="topological domain" description="Cytoplasmic" evidence="4">
    <location>
        <begin position="422"/>
        <end position="447"/>
    </location>
</feature>
<feature type="transmembrane region" description="Helical; Name=6" evidence="4">
    <location>
        <begin position="448"/>
        <end position="468"/>
    </location>
</feature>
<feature type="topological domain" description="Extracellular" evidence="4">
    <location>
        <begin position="469"/>
        <end position="508"/>
    </location>
</feature>
<feature type="transmembrane region" description="Helical; Name=7" evidence="4">
    <location>
        <begin position="509"/>
        <end position="529"/>
    </location>
</feature>
<feature type="topological domain" description="Cytoplasmic" evidence="4">
    <location>
        <begin position="530"/>
        <end position="591"/>
    </location>
</feature>
<feature type="domain" description="FZ" evidence="5">
    <location>
        <begin position="34"/>
        <end position="155"/>
    </location>
</feature>
<feature type="region of interest" description="Required for Wnt-activated receptor activity" evidence="2">
    <location>
        <begin position="58"/>
        <end position="172"/>
    </location>
</feature>
<feature type="region of interest" description="Required for CTNNB1 accumulation and TCF transcription factor activity" evidence="2">
    <location>
        <begin position="554"/>
        <end position="591"/>
    </location>
</feature>
<feature type="short sequence motif" description="Lys-Thr-X-X-X-Trp motif, mediates interaction with the PDZ domain of Dvl family members" evidence="1">
    <location>
        <begin position="532"/>
        <end position="537"/>
    </location>
</feature>
<feature type="glycosylation site" description="N-linked (GlcNAc...) asparagine" evidence="4">
    <location>
        <position position="53"/>
    </location>
</feature>
<feature type="glycosylation site" description="N-linked (GlcNAc...) asparagine" evidence="4">
    <location>
        <position position="158"/>
    </location>
</feature>
<feature type="disulfide bond" evidence="5">
    <location>
        <begin position="39"/>
        <end position="100"/>
    </location>
</feature>
<feature type="disulfide bond" evidence="5">
    <location>
        <begin position="47"/>
        <end position="93"/>
    </location>
</feature>
<feature type="disulfide bond" evidence="5">
    <location>
        <begin position="84"/>
        <end position="122"/>
    </location>
</feature>
<feature type="disulfide bond" evidence="5">
    <location>
        <begin position="111"/>
        <end position="152"/>
    </location>
</feature>
<feature type="disulfide bond" evidence="5">
    <location>
        <begin position="115"/>
        <end position="139"/>
    </location>
</feature>
<comment type="function">
    <text evidence="2 3 6">Receptor for WNT2 that is coupled to the beta-catenin canonical signaling pathway, which leads to the activation of disheveled proteins, inhibition of GSK-3 kinase, nuclear accumulation of beta-catenin and activation of Wnt target genes (By similarity). Plays a role in neuromuscular junction (NMJ) assembly by negatively regulating the clustering of acetylcholine receptors (AChR) through the beta-catenin canonical signaling pathway (By similarity). May play a role in neural progenitor cells (NPCs) viability through the beta-catenin canonical signaling pathway by negatively regulating cell cycle arrest leading to inhibition of neuron apoptotic process (PubMed:27509850). During hippocampal development, regulates neuroblast proliferation and apoptotic cell death. Controls bone formation through non canonical Wnt signaling mediated via ISG15. Positively regulates bone regeneration through non canonical Wnt signaling (By similarity).</text>
</comment>
<comment type="subcellular location">
    <subcellularLocation>
        <location evidence="3">Cell membrane</location>
        <topology evidence="4">Multi-pass membrane protein</topology>
    </subcellularLocation>
    <text evidence="2">Relocalizes DVL1 to the cell membrane leading to phosphorylation of DVL1 and AXIN1 relocalization to the cell membrane.</text>
</comment>
<comment type="tissue specificity">
    <text evidence="6">Expressed predominantly in adult and fetal brain, testis, eye, skeletal muscle and kidney. Moderately expressed in pancreas, thyroid, adrenal cortex, small intestine and stomach. Detected in fetal liver and kidney. Expressed in neural progenitor cells (PubMed:27509850).</text>
</comment>
<comment type="domain">
    <text evidence="1">Lys-Thr-X-X-X-Trp motif interacts with the PDZ domain of Dvl (Disheveled) family members and is involved in the activation of the Wnt/beta-catenin signaling pathway.</text>
</comment>
<comment type="domain">
    <text evidence="1">The FZ domain is involved in binding with Wnt ligands.</text>
</comment>
<comment type="PTM">
    <text evidence="1">Ubiquitinated by ZNRF3, leading to its degradation by the proteasome.</text>
</comment>
<comment type="miscellaneous">
    <text evidence="6">Authors show that FZD9 is responsible for the cellular phenotype found in neural progenitor cells (NPCs) derived from Williams syndrome patients namely increased apoptosis of neural progenitor cells (NPCs).</text>
</comment>
<comment type="similarity">
    <text evidence="7">Belongs to the G-protein coupled receptor Fz/Smo family.</text>
</comment>
<comment type="caution">
    <text evidence="7">Has been first described as FZD3 in literature.</text>
</comment>
<gene>
    <name type="primary">FZD9</name>
    <name type="synonym">FZD3</name>
</gene>